<gene>
    <name evidence="1" type="primary">metG</name>
    <name type="ordered locus">Mpal_0695</name>
</gene>
<protein>
    <recommendedName>
        <fullName evidence="1">Methionine--tRNA ligase</fullName>
        <ecNumber evidence="1">6.1.1.10</ecNumber>
    </recommendedName>
    <alternativeName>
        <fullName evidence="1">Methionyl-tRNA synthetase</fullName>
        <shortName evidence="1">MetRS</shortName>
    </alternativeName>
</protein>
<accession>B8GFL4</accession>
<name>SYM_METPE</name>
<organism>
    <name type="scientific">Methanosphaerula palustris (strain ATCC BAA-1556 / DSM 19958 / E1-9c)</name>
    <dbReference type="NCBI Taxonomy" id="521011"/>
    <lineage>
        <taxon>Archaea</taxon>
        <taxon>Methanobacteriati</taxon>
        <taxon>Methanobacteriota</taxon>
        <taxon>Stenosarchaea group</taxon>
        <taxon>Methanomicrobia</taxon>
        <taxon>Methanomicrobiales</taxon>
        <taxon>Methanoregulaceae</taxon>
        <taxon>Methanosphaerula</taxon>
    </lineage>
</organism>
<sequence>MSKGPILVTCGLPYTNGPCHLGHLRTYVPGDMYVRYLRHRGEEVVFVCGSDNHGTPIVVSAEEQGVTPKELSLKYHHHFEETFIKMGIRFDRFGMTDGKANHHRTREMMQRLIDKGYIYSATVSQSYCTTCSRFLPDRYVEGICPHCGAVARGDECDQGCGKHLEPGEIRDPVCKVCGTRAELRSQEHFFFKLSAFKEFLGTFLKGVRGTDNAKNYALGWVNDDLHDWCITRTLDWGVKFPGRDDLVVYVWVDAPVGYIAFTEEWAAAHGRDWREFWCGDGEITHFIGGDITYHHCIFWPALLKGAGYGVPSAIVASGMLKIDDHKFSKSRGYVVWTNDDYLDLGLPADYLRYYLLAYTSHTKELNFSWQAFADRVNNELVNTFGNFVHRTLHFAHAQGIGIPDLDADQEILQRIDETIAAVDTAMDAFEFKNAVDAVMTLAAFGNNYIQTAAPWKLIKTDRPAAVQVIRNCLQLVRALALLIDPTMPETASKIWMMLGETDQVRDHRTSEATEPLTAGELAPPTTLFARMEEKEVATLEKTLMMRVEEAEKRGQPTEELISIDEFGKMKLIVGTVISAEKIPKSSKLLKLIVDLGSERRQIVSGIAKFYDPEHLVGSSVVVIANLQPVTIFGVESRGMILAAGDNAALLTPNQAVEPGTPIR</sequence>
<reference key="1">
    <citation type="journal article" date="2015" name="Genome Announc.">
        <title>Complete Genome Sequence of Methanosphaerula palustris E1-9CT, a Hydrogenotrophic Methanogen Isolated from a Minerotrophic Fen Peatland.</title>
        <authorList>
            <person name="Cadillo-Quiroz H."/>
            <person name="Browne P."/>
            <person name="Kyrpides N."/>
            <person name="Woyke T."/>
            <person name="Goodwin L."/>
            <person name="Detter C."/>
            <person name="Yavitt J.B."/>
            <person name="Zinder S.H."/>
        </authorList>
    </citation>
    <scope>NUCLEOTIDE SEQUENCE [LARGE SCALE GENOMIC DNA]</scope>
    <source>
        <strain>ATCC BAA-1556 / DSM 19958 / E1-9c</strain>
    </source>
</reference>
<dbReference type="EC" id="6.1.1.10" evidence="1"/>
<dbReference type="EMBL" id="CP001338">
    <property type="protein sequence ID" value="ACL16062.1"/>
    <property type="molecule type" value="Genomic_DNA"/>
</dbReference>
<dbReference type="RefSeq" id="WP_012617381.1">
    <property type="nucleotide sequence ID" value="NC_011832.1"/>
</dbReference>
<dbReference type="SMR" id="B8GFL4"/>
<dbReference type="STRING" id="521011.Mpal_0695"/>
<dbReference type="GeneID" id="7271841"/>
<dbReference type="KEGG" id="mpl:Mpal_0695"/>
<dbReference type="eggNOG" id="arCOG00810">
    <property type="taxonomic scope" value="Archaea"/>
</dbReference>
<dbReference type="HOGENOM" id="CLU_009710_7_0_2"/>
<dbReference type="OrthoDB" id="371856at2157"/>
<dbReference type="Proteomes" id="UP000002457">
    <property type="component" value="Chromosome"/>
</dbReference>
<dbReference type="GO" id="GO:0017101">
    <property type="term" value="C:aminoacyl-tRNA synthetase multienzyme complex"/>
    <property type="evidence" value="ECO:0007669"/>
    <property type="project" value="TreeGrafter"/>
</dbReference>
<dbReference type="GO" id="GO:0005829">
    <property type="term" value="C:cytosol"/>
    <property type="evidence" value="ECO:0007669"/>
    <property type="project" value="TreeGrafter"/>
</dbReference>
<dbReference type="GO" id="GO:0005524">
    <property type="term" value="F:ATP binding"/>
    <property type="evidence" value="ECO:0007669"/>
    <property type="project" value="UniProtKB-UniRule"/>
</dbReference>
<dbReference type="GO" id="GO:0046872">
    <property type="term" value="F:metal ion binding"/>
    <property type="evidence" value="ECO:0007669"/>
    <property type="project" value="UniProtKB-KW"/>
</dbReference>
<dbReference type="GO" id="GO:0004825">
    <property type="term" value="F:methionine-tRNA ligase activity"/>
    <property type="evidence" value="ECO:0007669"/>
    <property type="project" value="UniProtKB-UniRule"/>
</dbReference>
<dbReference type="GO" id="GO:0000049">
    <property type="term" value="F:tRNA binding"/>
    <property type="evidence" value="ECO:0007669"/>
    <property type="project" value="UniProtKB-KW"/>
</dbReference>
<dbReference type="GO" id="GO:0006431">
    <property type="term" value="P:methionyl-tRNA aminoacylation"/>
    <property type="evidence" value="ECO:0007669"/>
    <property type="project" value="UniProtKB-UniRule"/>
</dbReference>
<dbReference type="CDD" id="cd07957">
    <property type="entry name" value="Anticodon_Ia_Met"/>
    <property type="match status" value="1"/>
</dbReference>
<dbReference type="CDD" id="cd00814">
    <property type="entry name" value="MetRS_core"/>
    <property type="match status" value="1"/>
</dbReference>
<dbReference type="CDD" id="cd02800">
    <property type="entry name" value="tRNA_bind_EcMetRS_like"/>
    <property type="match status" value="1"/>
</dbReference>
<dbReference type="FunFam" id="2.20.28.20:FF:000001">
    <property type="entry name" value="Methionine--tRNA ligase"/>
    <property type="match status" value="1"/>
</dbReference>
<dbReference type="FunFam" id="2.40.50.140:FF:000042">
    <property type="entry name" value="Methionine--tRNA ligase"/>
    <property type="match status" value="1"/>
</dbReference>
<dbReference type="Gene3D" id="3.40.50.620">
    <property type="entry name" value="HUPs"/>
    <property type="match status" value="1"/>
</dbReference>
<dbReference type="Gene3D" id="1.10.730.10">
    <property type="entry name" value="Isoleucyl-tRNA Synthetase, Domain 1"/>
    <property type="match status" value="1"/>
</dbReference>
<dbReference type="Gene3D" id="2.20.28.20">
    <property type="entry name" value="Methionyl-tRNA synthetase, Zn-domain"/>
    <property type="match status" value="1"/>
</dbReference>
<dbReference type="Gene3D" id="2.40.50.140">
    <property type="entry name" value="Nucleic acid-binding proteins"/>
    <property type="match status" value="1"/>
</dbReference>
<dbReference type="HAMAP" id="MF_00098">
    <property type="entry name" value="Met_tRNA_synth_type1"/>
    <property type="match status" value="1"/>
</dbReference>
<dbReference type="InterPro" id="IPR041872">
    <property type="entry name" value="Anticodon_Met"/>
</dbReference>
<dbReference type="InterPro" id="IPR004495">
    <property type="entry name" value="Met-tRNA-synth_bsu_C"/>
</dbReference>
<dbReference type="InterPro" id="IPR023458">
    <property type="entry name" value="Met-tRNA_ligase_1"/>
</dbReference>
<dbReference type="InterPro" id="IPR014758">
    <property type="entry name" value="Met-tRNA_synth"/>
</dbReference>
<dbReference type="InterPro" id="IPR015413">
    <property type="entry name" value="Methionyl/Leucyl_tRNA_Synth"/>
</dbReference>
<dbReference type="InterPro" id="IPR033911">
    <property type="entry name" value="MetRS_core"/>
</dbReference>
<dbReference type="InterPro" id="IPR029038">
    <property type="entry name" value="MetRS_Zn"/>
</dbReference>
<dbReference type="InterPro" id="IPR012340">
    <property type="entry name" value="NA-bd_OB-fold"/>
</dbReference>
<dbReference type="InterPro" id="IPR014729">
    <property type="entry name" value="Rossmann-like_a/b/a_fold"/>
</dbReference>
<dbReference type="InterPro" id="IPR002547">
    <property type="entry name" value="tRNA-bd_dom"/>
</dbReference>
<dbReference type="InterPro" id="IPR009080">
    <property type="entry name" value="tRNAsynth_Ia_anticodon-bd"/>
</dbReference>
<dbReference type="NCBIfam" id="TIGR00398">
    <property type="entry name" value="metG"/>
    <property type="match status" value="1"/>
</dbReference>
<dbReference type="NCBIfam" id="TIGR00399">
    <property type="entry name" value="metG_C_term"/>
    <property type="match status" value="1"/>
</dbReference>
<dbReference type="NCBIfam" id="NF001100">
    <property type="entry name" value="PRK00133.1"/>
    <property type="match status" value="1"/>
</dbReference>
<dbReference type="PANTHER" id="PTHR45765">
    <property type="entry name" value="METHIONINE--TRNA LIGASE"/>
    <property type="match status" value="1"/>
</dbReference>
<dbReference type="PANTHER" id="PTHR45765:SF1">
    <property type="entry name" value="METHIONINE--TRNA LIGASE, CYTOPLASMIC"/>
    <property type="match status" value="1"/>
</dbReference>
<dbReference type="Pfam" id="PF19303">
    <property type="entry name" value="Anticodon_3"/>
    <property type="match status" value="1"/>
</dbReference>
<dbReference type="Pfam" id="PF09334">
    <property type="entry name" value="tRNA-synt_1g"/>
    <property type="match status" value="1"/>
</dbReference>
<dbReference type="Pfam" id="PF01588">
    <property type="entry name" value="tRNA_bind"/>
    <property type="match status" value="1"/>
</dbReference>
<dbReference type="PRINTS" id="PR01041">
    <property type="entry name" value="TRNASYNTHMET"/>
</dbReference>
<dbReference type="SUPFAM" id="SSF47323">
    <property type="entry name" value="Anticodon-binding domain of a subclass of class I aminoacyl-tRNA synthetases"/>
    <property type="match status" value="1"/>
</dbReference>
<dbReference type="SUPFAM" id="SSF57770">
    <property type="entry name" value="Methionyl-tRNA synthetase (MetRS), Zn-domain"/>
    <property type="match status" value="1"/>
</dbReference>
<dbReference type="SUPFAM" id="SSF50249">
    <property type="entry name" value="Nucleic acid-binding proteins"/>
    <property type="match status" value="1"/>
</dbReference>
<dbReference type="SUPFAM" id="SSF52374">
    <property type="entry name" value="Nucleotidylyl transferase"/>
    <property type="match status" value="1"/>
</dbReference>
<dbReference type="PROSITE" id="PS50886">
    <property type="entry name" value="TRBD"/>
    <property type="match status" value="1"/>
</dbReference>
<keyword id="KW-0030">Aminoacyl-tRNA synthetase</keyword>
<keyword id="KW-0067">ATP-binding</keyword>
<keyword id="KW-0963">Cytoplasm</keyword>
<keyword id="KW-0436">Ligase</keyword>
<keyword id="KW-0479">Metal-binding</keyword>
<keyword id="KW-0547">Nucleotide-binding</keyword>
<keyword id="KW-0648">Protein biosynthesis</keyword>
<keyword id="KW-1185">Reference proteome</keyword>
<keyword id="KW-0694">RNA-binding</keyword>
<keyword id="KW-0820">tRNA-binding</keyword>
<keyword id="KW-0862">Zinc</keyword>
<comment type="function">
    <text evidence="1">Is required not only for elongation of protein synthesis but also for the initiation of all mRNA translation through initiator tRNA(fMet) aminoacylation.</text>
</comment>
<comment type="catalytic activity">
    <reaction evidence="1">
        <text>tRNA(Met) + L-methionine + ATP = L-methionyl-tRNA(Met) + AMP + diphosphate</text>
        <dbReference type="Rhea" id="RHEA:13481"/>
        <dbReference type="Rhea" id="RHEA-COMP:9667"/>
        <dbReference type="Rhea" id="RHEA-COMP:9698"/>
        <dbReference type="ChEBI" id="CHEBI:30616"/>
        <dbReference type="ChEBI" id="CHEBI:33019"/>
        <dbReference type="ChEBI" id="CHEBI:57844"/>
        <dbReference type="ChEBI" id="CHEBI:78442"/>
        <dbReference type="ChEBI" id="CHEBI:78530"/>
        <dbReference type="ChEBI" id="CHEBI:456215"/>
        <dbReference type="EC" id="6.1.1.10"/>
    </reaction>
</comment>
<comment type="cofactor">
    <cofactor evidence="1">
        <name>Zn(2+)</name>
        <dbReference type="ChEBI" id="CHEBI:29105"/>
    </cofactor>
    <text evidence="1">Binds 1 zinc ion per subunit.</text>
</comment>
<comment type="subunit">
    <text evidence="1">Homodimer.</text>
</comment>
<comment type="subcellular location">
    <subcellularLocation>
        <location evidence="1">Cytoplasm</location>
    </subcellularLocation>
</comment>
<comment type="similarity">
    <text evidence="1">Belongs to the class-I aminoacyl-tRNA synthetase family. MetG type 1 subfamily.</text>
</comment>
<evidence type="ECO:0000255" key="1">
    <source>
        <dbReference type="HAMAP-Rule" id="MF_00098"/>
    </source>
</evidence>
<feature type="chain" id="PRO_1000118736" description="Methionine--tRNA ligase">
    <location>
        <begin position="1"/>
        <end position="663"/>
    </location>
</feature>
<feature type="domain" description="tRNA-binding" evidence="1">
    <location>
        <begin position="565"/>
        <end position="663"/>
    </location>
</feature>
<feature type="short sequence motif" description="'HIGH' region">
    <location>
        <begin position="13"/>
        <end position="23"/>
    </location>
</feature>
<feature type="short sequence motif" description="'KMSKS' region">
    <location>
        <begin position="326"/>
        <end position="330"/>
    </location>
</feature>
<feature type="binding site" evidence="1">
    <location>
        <position position="144"/>
    </location>
    <ligand>
        <name>Zn(2+)</name>
        <dbReference type="ChEBI" id="CHEBI:29105"/>
    </ligand>
</feature>
<feature type="binding site" evidence="1">
    <location>
        <position position="147"/>
    </location>
    <ligand>
        <name>Zn(2+)</name>
        <dbReference type="ChEBI" id="CHEBI:29105"/>
    </ligand>
</feature>
<feature type="binding site" evidence="1">
    <location>
        <position position="156"/>
    </location>
    <ligand>
        <name>Zn(2+)</name>
        <dbReference type="ChEBI" id="CHEBI:29105"/>
    </ligand>
</feature>
<feature type="binding site" evidence="1">
    <location>
        <position position="160"/>
    </location>
    <ligand>
        <name>Zn(2+)</name>
        <dbReference type="ChEBI" id="CHEBI:29105"/>
    </ligand>
</feature>
<feature type="binding site" evidence="1">
    <location>
        <position position="329"/>
    </location>
    <ligand>
        <name>ATP</name>
        <dbReference type="ChEBI" id="CHEBI:30616"/>
    </ligand>
</feature>
<proteinExistence type="inferred from homology"/>